<keyword id="KW-0002">3D-structure</keyword>
<keyword id="KW-0010">Activator</keyword>
<keyword id="KW-1029">Fimbrium biogenesis</keyword>
<keyword id="KW-0804">Transcription</keyword>
<keyword id="KW-0805">Transcription regulation</keyword>
<reference key="1">
    <citation type="journal article" date="1987" name="Microb. Pathog.">
        <title>Nucleotide sequence analysis of a P fimbrial regulatory element of the uropathogenic Escherichia coli strain KS71 (04:K12).</title>
        <authorList>
            <person name="Rhen M."/>
            <person name="Vaeisaenen-Rhen V."/>
        </authorList>
    </citation>
    <scope>NUCLEOTIDE SEQUENCE [GENOMIC DNA]</scope>
    <source>
        <strain>O4:K12 / KS71 / UPEC</strain>
    </source>
</reference>
<accession>P62584</accession>
<accession>P25395</accession>
<evidence type="ECO:0007829" key="1">
    <source>
        <dbReference type="PDB" id="2HTJ"/>
    </source>
</evidence>
<sequence>MSEYMKNEILEFLNRHNGGKTAEIAEALAVTDYQARYYLLLLEKAGMVQRSPLRRGMATYWFLKGEKQAGQSCSSTT</sequence>
<name>KS71A_ECOLX</name>
<proteinExistence type="evidence at protein level"/>
<protein>
    <recommendedName>
        <fullName>P fimbrial regulatory protein KS71A</fullName>
    </recommendedName>
</protein>
<gene>
    <name type="primary">KS71A</name>
    <name type="synonym">papI_2</name>
</gene>
<dbReference type="EMBL" id="M57406">
    <property type="protein sequence ID" value="AAA24048.1"/>
    <property type="molecule type" value="Genomic_DNA"/>
</dbReference>
<dbReference type="PDB" id="2HTJ">
    <property type="method" value="NMR"/>
    <property type="chains" value="A=5-77"/>
</dbReference>
<dbReference type="PDBsum" id="2HTJ"/>
<dbReference type="BMRB" id="P62584"/>
<dbReference type="SMR" id="P62584"/>
<dbReference type="EvolutionaryTrace" id="P62584"/>
<dbReference type="GO" id="GO:0006355">
    <property type="term" value="P:regulation of DNA-templated transcription"/>
    <property type="evidence" value="ECO:0007669"/>
    <property type="project" value="InterPro"/>
</dbReference>
<dbReference type="Gene3D" id="1.10.10.10">
    <property type="entry name" value="Winged helix-like DNA-binding domain superfamily/Winged helix DNA-binding domain"/>
    <property type="match status" value="1"/>
</dbReference>
<dbReference type="InterPro" id="IPR006793">
    <property type="entry name" value="FaeA"/>
</dbReference>
<dbReference type="InterPro" id="IPR036388">
    <property type="entry name" value="WH-like_DNA-bd_sf"/>
</dbReference>
<dbReference type="InterPro" id="IPR036390">
    <property type="entry name" value="WH_DNA-bd_sf"/>
</dbReference>
<dbReference type="Pfam" id="PF04703">
    <property type="entry name" value="FaeA"/>
    <property type="match status" value="1"/>
</dbReference>
<dbReference type="SUPFAM" id="SSF46785">
    <property type="entry name" value="Winged helix' DNA-binding domain"/>
    <property type="match status" value="1"/>
</dbReference>
<feature type="chain" id="PRO_0000084333" description="P fimbrial regulatory protein KS71A">
    <location>
        <begin position="1"/>
        <end position="77"/>
    </location>
</feature>
<feature type="helix" evidence="1">
    <location>
        <begin position="6"/>
        <end position="15"/>
    </location>
</feature>
<feature type="helix" evidence="1">
    <location>
        <begin position="21"/>
        <end position="28"/>
    </location>
</feature>
<feature type="helix" evidence="1">
    <location>
        <begin position="32"/>
        <end position="45"/>
    </location>
</feature>
<feature type="strand" evidence="1">
    <location>
        <begin position="46"/>
        <end position="51"/>
    </location>
</feature>
<feature type="strand" evidence="1">
    <location>
        <begin position="54"/>
        <end position="58"/>
    </location>
</feature>
<feature type="strand" evidence="1">
    <location>
        <begin position="60"/>
        <end position="65"/>
    </location>
</feature>
<feature type="strand" evidence="1">
    <location>
        <begin position="67"/>
        <end position="70"/>
    </location>
</feature>
<feature type="helix" evidence="1">
    <location>
        <begin position="72"/>
        <end position="75"/>
    </location>
</feature>
<organism>
    <name type="scientific">Escherichia coli</name>
    <dbReference type="NCBI Taxonomy" id="562"/>
    <lineage>
        <taxon>Bacteria</taxon>
        <taxon>Pseudomonadati</taxon>
        <taxon>Pseudomonadota</taxon>
        <taxon>Gammaproteobacteria</taxon>
        <taxon>Enterobacterales</taxon>
        <taxon>Enterobacteriaceae</taxon>
        <taxon>Escherichia</taxon>
    </lineage>
</organism>